<reference evidence="6 7" key="1">
    <citation type="journal article" date="2012" name="J. Biochem.">
        <title>Crystal structure of the lectin of Camptosema pedicellatum: implications of a conservative substitution at the hydrophobic subsite.</title>
        <authorList>
            <person name="Souza Teixeira C."/>
            <person name="da Silva H.C."/>
            <person name="de Moura T.R."/>
            <person name="Pereira-Junior F.N."/>
            <person name="do Nascimento K.S."/>
            <person name="Nagano C.S."/>
            <person name="Sampaio A.H."/>
            <person name="Delatorre P."/>
            <person name="Rocha B.A."/>
            <person name="Cavada B.S."/>
        </authorList>
    </citation>
    <scope>PROTEIN SEQUENCE</scope>
    <scope>FUNCTION</scope>
    <scope>SUBUNIT</scope>
    <scope>MASS SPECTROMETRY</scope>
    <scope>X-RAY CRYSTALLOGRAPHY (2.16 ANGSTROMS) IN COMPLEX WITH CALCIUM AND MANGANESE</scope>
    <source>
        <tissue evidence="3">Seed</tissue>
    </source>
</reference>
<accession>J9PBR3</accession>
<accession>P86894</accession>
<keyword id="KW-0002">3D-structure</keyword>
<keyword id="KW-0106">Calcium</keyword>
<keyword id="KW-0903">Direct protein sequencing</keyword>
<keyword id="KW-0430">Lectin</keyword>
<keyword id="KW-0464">Manganese</keyword>
<keyword id="KW-0465">Mannose-binding</keyword>
<keyword id="KW-0479">Metal-binding</keyword>
<evidence type="ECO:0000255" key="1"/>
<evidence type="ECO:0000269" key="2">
    <source>
    </source>
</evidence>
<evidence type="ECO:0000303" key="3">
    <source>
    </source>
</evidence>
<evidence type="ECO:0000305" key="4"/>
<evidence type="ECO:0000305" key="5">
    <source>
    </source>
</evidence>
<evidence type="ECO:0000312" key="6">
    <source>
        <dbReference type="PDB" id="3U4X"/>
    </source>
</evidence>
<evidence type="ECO:0007744" key="7">
    <source>
        <dbReference type="PDB" id="3U4X"/>
    </source>
</evidence>
<evidence type="ECO:0007829" key="8">
    <source>
        <dbReference type="PDB" id="3U4X"/>
    </source>
</evidence>
<sequence>ADTIVAVELDTYPNTDIGDPNYQHIGINIKSIRSKATTRWNVQDGKVGTAHISYNSVAKRLSAIVSYPGGSSATVSYDVDLNNILPEWVRVGLSASTGVYKETNTILSWSFTSKLKTNSTADAQSLHFTFNQFSQSPKDLILQGDASTDSDGNLQLTRVSNGSPQSNSVGRALYYAPVHVWDKSAVVASFDATFTFLIKSPDSDPADGIAFFIANTDSSIPHGSGGRLLGLFPDAN</sequence>
<name>LECA_BIOPE</name>
<feature type="chain" id="PRO_0000439558" description="Lectin CPL" evidence="2">
    <location>
        <begin position="1"/>
        <end position="236"/>
    </location>
</feature>
<feature type="binding site" evidence="2 7">
    <location>
        <position position="8"/>
    </location>
    <ligand>
        <name>Mn(2+)</name>
        <dbReference type="ChEBI" id="CHEBI:29035"/>
    </ligand>
</feature>
<feature type="binding site" evidence="2 7">
    <location>
        <position position="10"/>
    </location>
    <ligand>
        <name>Ca(2+)</name>
        <dbReference type="ChEBI" id="CHEBI:29108"/>
    </ligand>
</feature>
<feature type="binding site" evidence="2 7">
    <location>
        <position position="10"/>
    </location>
    <ligand>
        <name>Mn(2+)</name>
        <dbReference type="ChEBI" id="CHEBI:29035"/>
    </ligand>
</feature>
<feature type="binding site" evidence="2 7">
    <location>
        <position position="12"/>
    </location>
    <ligand>
        <name>Ca(2+)</name>
        <dbReference type="ChEBI" id="CHEBI:29108"/>
    </ligand>
</feature>
<feature type="binding site" evidence="7">
    <location>
        <position position="14"/>
    </location>
    <ligand>
        <name>a carbohydrate</name>
        <dbReference type="ChEBI" id="CHEBI:16646"/>
    </ligand>
</feature>
<feature type="binding site" evidence="2 7">
    <location>
        <position position="14"/>
    </location>
    <ligand>
        <name>Ca(2+)</name>
        <dbReference type="ChEBI" id="CHEBI:29108"/>
    </ligand>
</feature>
<feature type="binding site" evidence="2 7">
    <location>
        <position position="19"/>
    </location>
    <ligand>
        <name>Ca(2+)</name>
        <dbReference type="ChEBI" id="CHEBI:29108"/>
    </ligand>
</feature>
<feature type="binding site" evidence="2 7">
    <location>
        <position position="19"/>
    </location>
    <ligand>
        <name>Mn(2+)</name>
        <dbReference type="ChEBI" id="CHEBI:29035"/>
    </ligand>
</feature>
<feature type="binding site" evidence="2 7">
    <location>
        <position position="24"/>
    </location>
    <ligand>
        <name>Mn(2+)</name>
        <dbReference type="ChEBI" id="CHEBI:29035"/>
    </ligand>
</feature>
<feature type="binding site" evidence="2 7">
    <location>
        <begin position="99"/>
        <end position="100"/>
    </location>
    <ligand>
        <name>a carbohydrate</name>
        <dbReference type="ChEBI" id="CHEBI:16646"/>
    </ligand>
</feature>
<feature type="binding site" evidence="7">
    <location>
        <position position="207"/>
    </location>
    <ligand>
        <name>a carbohydrate</name>
        <dbReference type="ChEBI" id="CHEBI:16646"/>
    </ligand>
</feature>
<feature type="binding site" evidence="2 7">
    <location>
        <position position="227"/>
    </location>
    <ligand>
        <name>a carbohydrate</name>
        <dbReference type="ChEBI" id="CHEBI:16646"/>
    </ligand>
</feature>
<feature type="strand" evidence="8">
    <location>
        <begin position="4"/>
        <end position="10"/>
    </location>
</feature>
<feature type="helix" evidence="8">
    <location>
        <begin position="15"/>
        <end position="17"/>
    </location>
</feature>
<feature type="strand" evidence="8">
    <location>
        <begin position="24"/>
        <end position="33"/>
    </location>
</feature>
<feature type="strand" evidence="8">
    <location>
        <begin position="35"/>
        <end position="39"/>
    </location>
</feature>
<feature type="strand" evidence="8">
    <location>
        <begin position="47"/>
        <end position="55"/>
    </location>
</feature>
<feature type="turn" evidence="8">
    <location>
        <begin position="56"/>
        <end position="59"/>
    </location>
</feature>
<feature type="strand" evidence="8">
    <location>
        <begin position="60"/>
        <end position="66"/>
    </location>
</feature>
<feature type="strand" evidence="8">
    <location>
        <begin position="73"/>
        <end position="78"/>
    </location>
</feature>
<feature type="helix" evidence="8">
    <location>
        <begin position="81"/>
        <end position="83"/>
    </location>
</feature>
<feature type="strand" evidence="8">
    <location>
        <begin position="87"/>
        <end position="96"/>
    </location>
</feature>
<feature type="strand" evidence="8">
    <location>
        <begin position="98"/>
        <end position="100"/>
    </location>
</feature>
<feature type="strand" evidence="8">
    <location>
        <begin position="105"/>
        <end position="120"/>
    </location>
</feature>
<feature type="strand" evidence="8">
    <location>
        <begin position="124"/>
        <end position="132"/>
    </location>
</feature>
<feature type="strand" evidence="8">
    <location>
        <begin position="140"/>
        <end position="144"/>
    </location>
</feature>
<feature type="strand" evidence="8">
    <location>
        <begin position="154"/>
        <end position="157"/>
    </location>
</feature>
<feature type="strand" evidence="8">
    <location>
        <begin position="169"/>
        <end position="176"/>
    </location>
</feature>
<feature type="strand" evidence="8">
    <location>
        <begin position="185"/>
        <end position="197"/>
    </location>
</feature>
<feature type="strand" evidence="8">
    <location>
        <begin position="201"/>
        <end position="204"/>
    </location>
</feature>
<feature type="strand" evidence="8">
    <location>
        <begin position="208"/>
        <end position="215"/>
    </location>
</feature>
<feature type="helix" evidence="8">
    <location>
        <begin position="226"/>
        <end position="228"/>
    </location>
</feature>
<feature type="turn" evidence="8">
    <location>
        <begin position="229"/>
        <end position="231"/>
    </location>
</feature>
<organism>
    <name type="scientific">Bionia pedicellata</name>
    <name type="common">Camptosema pedicellatum</name>
    <dbReference type="NCBI Taxonomy" id="232302"/>
    <lineage>
        <taxon>Eukaryota</taxon>
        <taxon>Viridiplantae</taxon>
        <taxon>Streptophyta</taxon>
        <taxon>Embryophyta</taxon>
        <taxon>Tracheophyta</taxon>
        <taxon>Spermatophyta</taxon>
        <taxon>Magnoliopsida</taxon>
        <taxon>eudicotyledons</taxon>
        <taxon>Gunneridae</taxon>
        <taxon>Pentapetalae</taxon>
        <taxon>rosids</taxon>
        <taxon>fabids</taxon>
        <taxon>Fabales</taxon>
        <taxon>Fabaceae</taxon>
        <taxon>Papilionoideae</taxon>
        <taxon>50 kb inversion clade</taxon>
        <taxon>NPAAA clade</taxon>
        <taxon>indigoferoid/millettioid clade</taxon>
        <taxon>Phaseoleae</taxon>
        <taxon>Bionia</taxon>
    </lineage>
</organism>
<dbReference type="PDB" id="3U4X">
    <property type="method" value="X-ray"/>
    <property type="resolution" value="2.16 A"/>
    <property type="chains" value="A=1-236"/>
</dbReference>
<dbReference type="PDBsum" id="3U4X"/>
<dbReference type="SMR" id="J9PBR3"/>
<dbReference type="UniLectin" id="J9PBR3"/>
<dbReference type="EvolutionaryTrace" id="J9PBR3"/>
<dbReference type="GO" id="GO:0005509">
    <property type="term" value="F:calcium ion binding"/>
    <property type="evidence" value="ECO:0000314"/>
    <property type="project" value="UniProtKB"/>
</dbReference>
<dbReference type="GO" id="GO:0005536">
    <property type="term" value="F:D-glucose binding"/>
    <property type="evidence" value="ECO:0000314"/>
    <property type="project" value="UniProtKB"/>
</dbReference>
<dbReference type="GO" id="GO:0005537">
    <property type="term" value="F:D-mannose binding"/>
    <property type="evidence" value="ECO:0000314"/>
    <property type="project" value="UniProtKB"/>
</dbReference>
<dbReference type="GO" id="GO:0030145">
    <property type="term" value="F:manganese ion binding"/>
    <property type="evidence" value="ECO:0000314"/>
    <property type="project" value="UniProtKB"/>
</dbReference>
<dbReference type="CDD" id="cd06899">
    <property type="entry name" value="lectin_legume_LecRK_Arcelin_ConA"/>
    <property type="match status" value="1"/>
</dbReference>
<dbReference type="FunFam" id="2.60.120.200:FF:000227">
    <property type="entry name" value="Concanavalin-A"/>
    <property type="match status" value="1"/>
</dbReference>
<dbReference type="Gene3D" id="2.60.120.200">
    <property type="match status" value="1"/>
</dbReference>
<dbReference type="InterPro" id="IPR013320">
    <property type="entry name" value="ConA-like_dom_sf"/>
</dbReference>
<dbReference type="InterPro" id="IPR000985">
    <property type="entry name" value="Lectin_LegA_CS"/>
</dbReference>
<dbReference type="InterPro" id="IPR019825">
    <property type="entry name" value="Lectin_legB_Mn/Ca_BS"/>
</dbReference>
<dbReference type="InterPro" id="IPR001220">
    <property type="entry name" value="Legume_lectin_dom"/>
</dbReference>
<dbReference type="InterPro" id="IPR050258">
    <property type="entry name" value="Leguminous_Lectin"/>
</dbReference>
<dbReference type="PANTHER" id="PTHR32401">
    <property type="entry name" value="CONCANAVALIN A-LIKE LECTIN FAMILY PROTEIN"/>
    <property type="match status" value="1"/>
</dbReference>
<dbReference type="PANTHER" id="PTHR32401:SF47">
    <property type="entry name" value="LEGUME LECTIN DOMAIN-CONTAINING PROTEIN"/>
    <property type="match status" value="1"/>
</dbReference>
<dbReference type="Pfam" id="PF00139">
    <property type="entry name" value="Lectin_legB"/>
    <property type="match status" value="2"/>
</dbReference>
<dbReference type="SUPFAM" id="SSF49899">
    <property type="entry name" value="Concanavalin A-like lectins/glucanases"/>
    <property type="match status" value="1"/>
</dbReference>
<dbReference type="PROSITE" id="PS00308">
    <property type="entry name" value="LECTIN_LEGUME_ALPHA"/>
    <property type="match status" value="1"/>
</dbReference>
<dbReference type="PROSITE" id="PS00307">
    <property type="entry name" value="LECTIN_LEGUME_BETA"/>
    <property type="match status" value="1"/>
</dbReference>
<comment type="function">
    <text evidence="2">D-mannose/D-glucose-binding lectin that also binds derivative alpha-methyl-D-mannppyranoside. Has hemagglutinating activity towards rabbit erythrocytes.</text>
</comment>
<comment type="subunit">
    <text evidence="2">Homotetramer; dimer of dimers.</text>
</comment>
<comment type="PTM">
    <text evidence="3 4">Concanavalin A-like lectins of the Diocleinae subtribe undergo proteolytic processing referred to as circular permutation. The propeptide is split into an N-terminal and a C-terminal part, the gamma and beta chain, respectively. These are then religated in beta-gamma order to form the mature alpha chain. The beta and gamma chains can often be detected in cell extracts. Residues 1-118 of the mature chain, as displayed here, probably constitute the beta chain in the propeptide, residues 119-236 the gamma chain.</text>
</comment>
<comment type="mass spectrometry"/>
<comment type="miscellaneous">
    <text evidence="5">Binds one manganese (or another transition metal) ion and one calcium ion. The metal ions are essential for the saccharide-binding and cell-agglutinating activities.</text>
</comment>
<comment type="similarity">
    <text evidence="1">Belongs to the leguminous lectin family.</text>
</comment>
<proteinExistence type="evidence at protein level"/>
<protein>
    <recommendedName>
        <fullName evidence="3">Lectin CPL</fullName>
    </recommendedName>
</protein>